<protein>
    <recommendedName>
        <fullName evidence="1">Ferredoxin--NADP reductase</fullName>
        <shortName evidence="1">FNR</shortName>
        <shortName evidence="1">Fd-NADP(+) reductase</shortName>
        <ecNumber evidence="1">1.18.1.2</ecNumber>
    </recommendedName>
</protein>
<dbReference type="EC" id="1.18.1.2" evidence="1"/>
<dbReference type="EMBL" id="CP001052">
    <property type="protein sequence ID" value="ACD16642.1"/>
    <property type="molecule type" value="Genomic_DNA"/>
</dbReference>
<dbReference type="RefSeq" id="WP_012433240.1">
    <property type="nucleotide sequence ID" value="NC_010681.1"/>
</dbReference>
<dbReference type="SMR" id="B2T4Y1"/>
<dbReference type="STRING" id="398527.Bphyt_2243"/>
<dbReference type="KEGG" id="bpy:Bphyt_2243"/>
<dbReference type="eggNOG" id="COG0492">
    <property type="taxonomic scope" value="Bacteria"/>
</dbReference>
<dbReference type="HOGENOM" id="CLU_031864_5_5_4"/>
<dbReference type="OrthoDB" id="9806179at2"/>
<dbReference type="Proteomes" id="UP000001739">
    <property type="component" value="Chromosome 1"/>
</dbReference>
<dbReference type="GO" id="GO:0004324">
    <property type="term" value="F:ferredoxin-NADP+ reductase activity"/>
    <property type="evidence" value="ECO:0007669"/>
    <property type="project" value="UniProtKB-UniRule"/>
</dbReference>
<dbReference type="GO" id="GO:0050660">
    <property type="term" value="F:flavin adenine dinucleotide binding"/>
    <property type="evidence" value="ECO:0007669"/>
    <property type="project" value="UniProtKB-UniRule"/>
</dbReference>
<dbReference type="GO" id="GO:0050661">
    <property type="term" value="F:NADP binding"/>
    <property type="evidence" value="ECO:0007669"/>
    <property type="project" value="UniProtKB-UniRule"/>
</dbReference>
<dbReference type="Gene3D" id="3.50.50.60">
    <property type="entry name" value="FAD/NAD(P)-binding domain"/>
    <property type="match status" value="2"/>
</dbReference>
<dbReference type="HAMAP" id="MF_01685">
    <property type="entry name" value="FENR2"/>
    <property type="match status" value="1"/>
</dbReference>
<dbReference type="InterPro" id="IPR036188">
    <property type="entry name" value="FAD/NAD-bd_sf"/>
</dbReference>
<dbReference type="InterPro" id="IPR023753">
    <property type="entry name" value="FAD/NAD-binding_dom"/>
</dbReference>
<dbReference type="InterPro" id="IPR022890">
    <property type="entry name" value="Fd--NADP_Rdtase_type_2"/>
</dbReference>
<dbReference type="InterPro" id="IPR050097">
    <property type="entry name" value="Ferredoxin-NADP_redctase_2"/>
</dbReference>
<dbReference type="PANTHER" id="PTHR48105">
    <property type="entry name" value="THIOREDOXIN REDUCTASE 1-RELATED-RELATED"/>
    <property type="match status" value="1"/>
</dbReference>
<dbReference type="Pfam" id="PF07992">
    <property type="entry name" value="Pyr_redox_2"/>
    <property type="match status" value="1"/>
</dbReference>
<dbReference type="PRINTS" id="PR00368">
    <property type="entry name" value="FADPNR"/>
</dbReference>
<dbReference type="PRINTS" id="PR00469">
    <property type="entry name" value="PNDRDTASEII"/>
</dbReference>
<dbReference type="SUPFAM" id="SSF51905">
    <property type="entry name" value="FAD/NAD(P)-binding domain"/>
    <property type="match status" value="1"/>
</dbReference>
<reference key="1">
    <citation type="journal article" date="2011" name="J. Bacteriol.">
        <title>Complete genome sequence of the plant growth-promoting endophyte Burkholderia phytofirmans strain PsJN.</title>
        <authorList>
            <person name="Weilharter A."/>
            <person name="Mitter B."/>
            <person name="Shin M.V."/>
            <person name="Chain P.S."/>
            <person name="Nowak J."/>
            <person name="Sessitsch A."/>
        </authorList>
    </citation>
    <scope>NUCLEOTIDE SEQUENCE [LARGE SCALE GENOMIC DNA]</scope>
    <source>
        <strain>DSM 17436 / LMG 22146 / PsJN</strain>
    </source>
</reference>
<accession>B2T4Y1</accession>
<sequence length="349" mass="37339">MTSAADQQPPPIRTDVLIVGAGPVGLFAAFEAGVIGLSCQIVDGLDKVGGQCIELYPDKPIYDIPAIASCTARELVERLLAQCKPFDPPIHLEQRVESVEQNDDGRWTVRTDRGLVFDVAAILLAAGNGAFVPQKLALAEAVPLESRHVHYSVPRLADFADKVVVVAGGGDSALDWALALRKVARRVTLVHRRSGFSAADSSVASMRRAVEAGEMDFIVGAIAGLNVEGDALKSITLRHIEGETQLAAEHLVALYGLVADLGPIAQWGLSIHAGRVDVDTSNYESSRPGIFAVGDIANYPNKQKLILSGFHEASLALRRAYSYAYPDKKRVHVHSSYDAKLAEKVSATG</sequence>
<proteinExistence type="inferred from homology"/>
<gene>
    <name type="ordered locus">Bphyt_2243</name>
</gene>
<organism>
    <name type="scientific">Paraburkholderia phytofirmans (strain DSM 17436 / LMG 22146 / PsJN)</name>
    <name type="common">Burkholderia phytofirmans</name>
    <dbReference type="NCBI Taxonomy" id="398527"/>
    <lineage>
        <taxon>Bacteria</taxon>
        <taxon>Pseudomonadati</taxon>
        <taxon>Pseudomonadota</taxon>
        <taxon>Betaproteobacteria</taxon>
        <taxon>Burkholderiales</taxon>
        <taxon>Burkholderiaceae</taxon>
        <taxon>Paraburkholderia</taxon>
    </lineage>
</organism>
<evidence type="ECO:0000255" key="1">
    <source>
        <dbReference type="HAMAP-Rule" id="MF_01685"/>
    </source>
</evidence>
<keyword id="KW-0274">FAD</keyword>
<keyword id="KW-0285">Flavoprotein</keyword>
<keyword id="KW-0521">NADP</keyword>
<keyword id="KW-0560">Oxidoreductase</keyword>
<comment type="catalytic activity">
    <reaction evidence="1">
        <text>2 reduced [2Fe-2S]-[ferredoxin] + NADP(+) + H(+) = 2 oxidized [2Fe-2S]-[ferredoxin] + NADPH</text>
        <dbReference type="Rhea" id="RHEA:20125"/>
        <dbReference type="Rhea" id="RHEA-COMP:10000"/>
        <dbReference type="Rhea" id="RHEA-COMP:10001"/>
        <dbReference type="ChEBI" id="CHEBI:15378"/>
        <dbReference type="ChEBI" id="CHEBI:33737"/>
        <dbReference type="ChEBI" id="CHEBI:33738"/>
        <dbReference type="ChEBI" id="CHEBI:57783"/>
        <dbReference type="ChEBI" id="CHEBI:58349"/>
        <dbReference type="EC" id="1.18.1.2"/>
    </reaction>
</comment>
<comment type="cofactor">
    <cofactor evidence="1">
        <name>FAD</name>
        <dbReference type="ChEBI" id="CHEBI:57692"/>
    </cofactor>
    <text evidence="1">Binds 1 FAD per subunit.</text>
</comment>
<comment type="subunit">
    <text evidence="1">Homodimer.</text>
</comment>
<comment type="similarity">
    <text evidence="1">Belongs to the ferredoxin--NADP reductase type 2 family.</text>
</comment>
<feature type="chain" id="PRO_0000364813" description="Ferredoxin--NADP reductase">
    <location>
        <begin position="1"/>
        <end position="349"/>
    </location>
</feature>
<feature type="binding site" evidence="1">
    <location>
        <position position="43"/>
    </location>
    <ligand>
        <name>FAD</name>
        <dbReference type="ChEBI" id="CHEBI:57692"/>
    </ligand>
</feature>
<feature type="binding site" evidence="1">
    <location>
        <position position="51"/>
    </location>
    <ligand>
        <name>FAD</name>
        <dbReference type="ChEBI" id="CHEBI:57692"/>
    </ligand>
</feature>
<feature type="binding site" evidence="1">
    <location>
        <position position="56"/>
    </location>
    <ligand>
        <name>FAD</name>
        <dbReference type="ChEBI" id="CHEBI:57692"/>
    </ligand>
</feature>
<feature type="binding site" evidence="1">
    <location>
        <position position="96"/>
    </location>
    <ligand>
        <name>FAD</name>
        <dbReference type="ChEBI" id="CHEBI:57692"/>
    </ligand>
</feature>
<feature type="binding site" evidence="1">
    <location>
        <position position="131"/>
    </location>
    <ligand>
        <name>FAD</name>
        <dbReference type="ChEBI" id="CHEBI:57692"/>
    </ligand>
</feature>
<feature type="binding site" evidence="1">
    <location>
        <position position="295"/>
    </location>
    <ligand>
        <name>FAD</name>
        <dbReference type="ChEBI" id="CHEBI:57692"/>
    </ligand>
</feature>
<feature type="binding site" evidence="1">
    <location>
        <position position="336"/>
    </location>
    <ligand>
        <name>FAD</name>
        <dbReference type="ChEBI" id="CHEBI:57692"/>
    </ligand>
</feature>
<name>FENR_PARPJ</name>